<dbReference type="EC" id="3.1.26.4" evidence="1"/>
<dbReference type="EMBL" id="AP007281">
    <property type="protein sequence ID" value="BAG25263.1"/>
    <property type="molecule type" value="Genomic_DNA"/>
</dbReference>
<dbReference type="RefSeq" id="WP_003668089.1">
    <property type="nucleotide sequence ID" value="NC_010609.1"/>
</dbReference>
<dbReference type="SMR" id="B2G731"/>
<dbReference type="KEGG" id="lrf:LAR_0747"/>
<dbReference type="HOGENOM" id="CLU_036532_2_1_9"/>
<dbReference type="GO" id="GO:0005737">
    <property type="term" value="C:cytoplasm"/>
    <property type="evidence" value="ECO:0007669"/>
    <property type="project" value="UniProtKB-SubCell"/>
</dbReference>
<dbReference type="GO" id="GO:0032299">
    <property type="term" value="C:ribonuclease H2 complex"/>
    <property type="evidence" value="ECO:0007669"/>
    <property type="project" value="TreeGrafter"/>
</dbReference>
<dbReference type="GO" id="GO:0030145">
    <property type="term" value="F:manganese ion binding"/>
    <property type="evidence" value="ECO:0007669"/>
    <property type="project" value="UniProtKB-UniRule"/>
</dbReference>
<dbReference type="GO" id="GO:0003723">
    <property type="term" value="F:RNA binding"/>
    <property type="evidence" value="ECO:0007669"/>
    <property type="project" value="InterPro"/>
</dbReference>
<dbReference type="GO" id="GO:0004523">
    <property type="term" value="F:RNA-DNA hybrid ribonuclease activity"/>
    <property type="evidence" value="ECO:0007669"/>
    <property type="project" value="UniProtKB-UniRule"/>
</dbReference>
<dbReference type="GO" id="GO:0043137">
    <property type="term" value="P:DNA replication, removal of RNA primer"/>
    <property type="evidence" value="ECO:0007669"/>
    <property type="project" value="TreeGrafter"/>
</dbReference>
<dbReference type="GO" id="GO:0006298">
    <property type="term" value="P:mismatch repair"/>
    <property type="evidence" value="ECO:0007669"/>
    <property type="project" value="TreeGrafter"/>
</dbReference>
<dbReference type="CDD" id="cd07182">
    <property type="entry name" value="RNase_HII_bacteria_HII_like"/>
    <property type="match status" value="1"/>
</dbReference>
<dbReference type="FunFam" id="3.30.420.10:FF:000006">
    <property type="entry name" value="Ribonuclease HII"/>
    <property type="match status" value="1"/>
</dbReference>
<dbReference type="Gene3D" id="3.30.420.10">
    <property type="entry name" value="Ribonuclease H-like superfamily/Ribonuclease H"/>
    <property type="match status" value="1"/>
</dbReference>
<dbReference type="HAMAP" id="MF_00052_B">
    <property type="entry name" value="RNase_HII_B"/>
    <property type="match status" value="1"/>
</dbReference>
<dbReference type="InterPro" id="IPR022898">
    <property type="entry name" value="RNase_HII"/>
</dbReference>
<dbReference type="InterPro" id="IPR001352">
    <property type="entry name" value="RNase_HII/HIII"/>
</dbReference>
<dbReference type="InterPro" id="IPR024567">
    <property type="entry name" value="RNase_HII/HIII_dom"/>
</dbReference>
<dbReference type="InterPro" id="IPR012337">
    <property type="entry name" value="RNaseH-like_sf"/>
</dbReference>
<dbReference type="InterPro" id="IPR036397">
    <property type="entry name" value="RNaseH_sf"/>
</dbReference>
<dbReference type="NCBIfam" id="NF000594">
    <property type="entry name" value="PRK00015.1-1"/>
    <property type="match status" value="1"/>
</dbReference>
<dbReference type="NCBIfam" id="NF000595">
    <property type="entry name" value="PRK00015.1-3"/>
    <property type="match status" value="1"/>
</dbReference>
<dbReference type="PANTHER" id="PTHR10954">
    <property type="entry name" value="RIBONUCLEASE H2 SUBUNIT A"/>
    <property type="match status" value="1"/>
</dbReference>
<dbReference type="PANTHER" id="PTHR10954:SF18">
    <property type="entry name" value="RIBONUCLEASE HII"/>
    <property type="match status" value="1"/>
</dbReference>
<dbReference type="Pfam" id="PF01351">
    <property type="entry name" value="RNase_HII"/>
    <property type="match status" value="1"/>
</dbReference>
<dbReference type="SUPFAM" id="SSF53098">
    <property type="entry name" value="Ribonuclease H-like"/>
    <property type="match status" value="1"/>
</dbReference>
<dbReference type="PROSITE" id="PS51975">
    <property type="entry name" value="RNASE_H_2"/>
    <property type="match status" value="1"/>
</dbReference>
<organism>
    <name type="scientific">Limosilactobacillus reuteri subsp. reuteri (strain JCM 1112)</name>
    <name type="common">Lactobacillus reuteri</name>
    <dbReference type="NCBI Taxonomy" id="557433"/>
    <lineage>
        <taxon>Bacteria</taxon>
        <taxon>Bacillati</taxon>
        <taxon>Bacillota</taxon>
        <taxon>Bacilli</taxon>
        <taxon>Lactobacillales</taxon>
        <taxon>Lactobacillaceae</taxon>
        <taxon>Limosilactobacillus</taxon>
    </lineage>
</organism>
<comment type="function">
    <text evidence="1">Endonuclease that specifically degrades the RNA of RNA-DNA hybrids.</text>
</comment>
<comment type="catalytic activity">
    <reaction evidence="1">
        <text>Endonucleolytic cleavage to 5'-phosphomonoester.</text>
        <dbReference type="EC" id="3.1.26.4"/>
    </reaction>
</comment>
<comment type="cofactor">
    <cofactor evidence="1">
        <name>Mn(2+)</name>
        <dbReference type="ChEBI" id="CHEBI:29035"/>
    </cofactor>
    <cofactor evidence="1">
        <name>Mg(2+)</name>
        <dbReference type="ChEBI" id="CHEBI:18420"/>
    </cofactor>
    <text evidence="1">Manganese or magnesium. Binds 1 divalent metal ion per monomer in the absence of substrate. May bind a second metal ion after substrate binding.</text>
</comment>
<comment type="subcellular location">
    <subcellularLocation>
        <location evidence="1">Cytoplasm</location>
    </subcellularLocation>
</comment>
<comment type="similarity">
    <text evidence="1">Belongs to the RNase HII family.</text>
</comment>
<keyword id="KW-0963">Cytoplasm</keyword>
<keyword id="KW-0255">Endonuclease</keyword>
<keyword id="KW-0378">Hydrolase</keyword>
<keyword id="KW-0464">Manganese</keyword>
<keyword id="KW-0479">Metal-binding</keyword>
<keyword id="KW-0540">Nuclease</keyword>
<gene>
    <name evidence="1" type="primary">rnhB</name>
    <name type="ordered locus">LAR_0747</name>
</gene>
<proteinExistence type="inferred from homology"/>
<accession>B2G731</accession>
<name>RNH2_LIMRJ</name>
<sequence>MNKETISQIKARLQTITDTTDPYLQTIHDDSRKGVQTAIQQFERRLARQKEAEEAFNNRFKYEKYYWENGCQYIAGMDEVGRGPLAGPVVTCAVILNADFDLIGVTDSKQLTRHERENLYLRIVDEAVEVSIAVNDAPVIDQMNIYAATQDAMIRAVNHLHHRPDHLIVDAVPLAIDIPQTTLIKGDQKSISVAAASIVAKEYRDHLMRDYDYVYPGYGFAQNMGYGTKEHLAGLEKMGATPIHRRSFNPVPKYLN</sequence>
<reference key="1">
    <citation type="journal article" date="2008" name="DNA Res.">
        <title>Comparative genome analysis of Lactobacillus reuteri and Lactobacillus fermentum reveal a genomic island for reuterin and cobalamin production.</title>
        <authorList>
            <person name="Morita H."/>
            <person name="Toh H."/>
            <person name="Fukuda S."/>
            <person name="Horikawa H."/>
            <person name="Oshima K."/>
            <person name="Suzuki T."/>
            <person name="Murakami M."/>
            <person name="Hisamatsu S."/>
            <person name="Kato Y."/>
            <person name="Takizawa T."/>
            <person name="Fukuoka H."/>
            <person name="Yoshimura T."/>
            <person name="Itoh K."/>
            <person name="O'Sullivan D.J."/>
            <person name="McKay L.L."/>
            <person name="Ohno H."/>
            <person name="Kikuchi J."/>
            <person name="Masaoka T."/>
            <person name="Hattori M."/>
        </authorList>
    </citation>
    <scope>NUCLEOTIDE SEQUENCE [LARGE SCALE GENOMIC DNA]</scope>
    <source>
        <strain>JCM 1112</strain>
    </source>
</reference>
<evidence type="ECO:0000255" key="1">
    <source>
        <dbReference type="HAMAP-Rule" id="MF_00052"/>
    </source>
</evidence>
<evidence type="ECO:0000255" key="2">
    <source>
        <dbReference type="PROSITE-ProRule" id="PRU01319"/>
    </source>
</evidence>
<protein>
    <recommendedName>
        <fullName evidence="1">Ribonuclease HII</fullName>
        <shortName evidence="1">RNase HII</shortName>
        <ecNumber evidence="1">3.1.26.4</ecNumber>
    </recommendedName>
</protein>
<feature type="chain" id="PRO_1000091633" description="Ribonuclease HII">
    <location>
        <begin position="1"/>
        <end position="256"/>
    </location>
</feature>
<feature type="domain" description="RNase H type-2" evidence="2">
    <location>
        <begin position="72"/>
        <end position="256"/>
    </location>
</feature>
<feature type="binding site" evidence="1">
    <location>
        <position position="78"/>
    </location>
    <ligand>
        <name>a divalent metal cation</name>
        <dbReference type="ChEBI" id="CHEBI:60240"/>
    </ligand>
</feature>
<feature type="binding site" evidence="1">
    <location>
        <position position="79"/>
    </location>
    <ligand>
        <name>a divalent metal cation</name>
        <dbReference type="ChEBI" id="CHEBI:60240"/>
    </ligand>
</feature>
<feature type="binding site" evidence="1">
    <location>
        <position position="170"/>
    </location>
    <ligand>
        <name>a divalent metal cation</name>
        <dbReference type="ChEBI" id="CHEBI:60240"/>
    </ligand>
</feature>